<reference key="1">
    <citation type="journal article" date="1997" name="DNA Res.">
        <title>Sequence analysis of the groESL-cotA region of the Bacillus subtilis genome, containing the restriction/modification system genes.</title>
        <authorList>
            <person name="Kasahara Y."/>
            <person name="Nakai S."/>
            <person name="Ogasawara N."/>
            <person name="Yata K."/>
            <person name="Sadaie Y."/>
        </authorList>
    </citation>
    <scope>NUCLEOTIDE SEQUENCE [GENOMIC DNA]</scope>
    <source>
        <strain>168 / Marburg / ATCC 6051 / DSM 10 / JCM 1465 / NBRC 13719 / NCIMB 3610 / NRRL NRS-744 / VKM B-501</strain>
    </source>
</reference>
<reference key="2">
    <citation type="journal article" date="1997" name="Nature">
        <title>The complete genome sequence of the Gram-positive bacterium Bacillus subtilis.</title>
        <authorList>
            <person name="Kunst F."/>
            <person name="Ogasawara N."/>
            <person name="Moszer I."/>
            <person name="Albertini A.M."/>
            <person name="Alloni G."/>
            <person name="Azevedo V."/>
            <person name="Bertero M.G."/>
            <person name="Bessieres P."/>
            <person name="Bolotin A."/>
            <person name="Borchert S."/>
            <person name="Borriss R."/>
            <person name="Boursier L."/>
            <person name="Brans A."/>
            <person name="Braun M."/>
            <person name="Brignell S.C."/>
            <person name="Bron S."/>
            <person name="Brouillet S."/>
            <person name="Bruschi C.V."/>
            <person name="Caldwell B."/>
            <person name="Capuano V."/>
            <person name="Carter N.M."/>
            <person name="Choi S.-K."/>
            <person name="Codani J.-J."/>
            <person name="Connerton I.F."/>
            <person name="Cummings N.J."/>
            <person name="Daniel R.A."/>
            <person name="Denizot F."/>
            <person name="Devine K.M."/>
            <person name="Duesterhoeft A."/>
            <person name="Ehrlich S.D."/>
            <person name="Emmerson P.T."/>
            <person name="Entian K.-D."/>
            <person name="Errington J."/>
            <person name="Fabret C."/>
            <person name="Ferrari E."/>
            <person name="Foulger D."/>
            <person name="Fritz C."/>
            <person name="Fujita M."/>
            <person name="Fujita Y."/>
            <person name="Fuma S."/>
            <person name="Galizzi A."/>
            <person name="Galleron N."/>
            <person name="Ghim S.-Y."/>
            <person name="Glaser P."/>
            <person name="Goffeau A."/>
            <person name="Golightly E.J."/>
            <person name="Grandi G."/>
            <person name="Guiseppi G."/>
            <person name="Guy B.J."/>
            <person name="Haga K."/>
            <person name="Haiech J."/>
            <person name="Harwood C.R."/>
            <person name="Henaut A."/>
            <person name="Hilbert H."/>
            <person name="Holsappel S."/>
            <person name="Hosono S."/>
            <person name="Hullo M.-F."/>
            <person name="Itaya M."/>
            <person name="Jones L.-M."/>
            <person name="Joris B."/>
            <person name="Karamata D."/>
            <person name="Kasahara Y."/>
            <person name="Klaerr-Blanchard M."/>
            <person name="Klein C."/>
            <person name="Kobayashi Y."/>
            <person name="Koetter P."/>
            <person name="Koningstein G."/>
            <person name="Krogh S."/>
            <person name="Kumano M."/>
            <person name="Kurita K."/>
            <person name="Lapidus A."/>
            <person name="Lardinois S."/>
            <person name="Lauber J."/>
            <person name="Lazarevic V."/>
            <person name="Lee S.-M."/>
            <person name="Levine A."/>
            <person name="Liu H."/>
            <person name="Masuda S."/>
            <person name="Mauel C."/>
            <person name="Medigue C."/>
            <person name="Medina N."/>
            <person name="Mellado R.P."/>
            <person name="Mizuno M."/>
            <person name="Moestl D."/>
            <person name="Nakai S."/>
            <person name="Noback M."/>
            <person name="Noone D."/>
            <person name="O'Reilly M."/>
            <person name="Ogawa K."/>
            <person name="Ogiwara A."/>
            <person name="Oudega B."/>
            <person name="Park S.-H."/>
            <person name="Parro V."/>
            <person name="Pohl T.M."/>
            <person name="Portetelle D."/>
            <person name="Porwollik S."/>
            <person name="Prescott A.M."/>
            <person name="Presecan E."/>
            <person name="Pujic P."/>
            <person name="Purnelle B."/>
            <person name="Rapoport G."/>
            <person name="Rey M."/>
            <person name="Reynolds S."/>
            <person name="Rieger M."/>
            <person name="Rivolta C."/>
            <person name="Rocha E."/>
            <person name="Roche B."/>
            <person name="Rose M."/>
            <person name="Sadaie Y."/>
            <person name="Sato T."/>
            <person name="Scanlan E."/>
            <person name="Schleich S."/>
            <person name="Schroeter R."/>
            <person name="Scoffone F."/>
            <person name="Sekiguchi J."/>
            <person name="Sekowska A."/>
            <person name="Seror S.J."/>
            <person name="Serror P."/>
            <person name="Shin B.-S."/>
            <person name="Soldo B."/>
            <person name="Sorokin A."/>
            <person name="Tacconi E."/>
            <person name="Takagi T."/>
            <person name="Takahashi H."/>
            <person name="Takemaru K."/>
            <person name="Takeuchi M."/>
            <person name="Tamakoshi A."/>
            <person name="Tanaka T."/>
            <person name="Terpstra P."/>
            <person name="Tognoni A."/>
            <person name="Tosato V."/>
            <person name="Uchiyama S."/>
            <person name="Vandenbol M."/>
            <person name="Vannier F."/>
            <person name="Vassarotti A."/>
            <person name="Viari A."/>
            <person name="Wambutt R."/>
            <person name="Wedler E."/>
            <person name="Wedler H."/>
            <person name="Weitzenegger T."/>
            <person name="Winters P."/>
            <person name="Wipat A."/>
            <person name="Yamamoto H."/>
            <person name="Yamane K."/>
            <person name="Yasumoto K."/>
            <person name="Yata K."/>
            <person name="Yoshida K."/>
            <person name="Yoshikawa H.-F."/>
            <person name="Zumstein E."/>
            <person name="Yoshikawa H."/>
            <person name="Danchin A."/>
        </authorList>
    </citation>
    <scope>NUCLEOTIDE SEQUENCE [LARGE SCALE GENOMIC DNA]</scope>
    <source>
        <strain>168</strain>
    </source>
</reference>
<keyword id="KW-1185">Reference proteome</keyword>
<keyword id="KW-0732">Signal</keyword>
<dbReference type="EMBL" id="AB007638">
    <property type="protein sequence ID" value="BAA22769.1"/>
    <property type="molecule type" value="Genomic_DNA"/>
</dbReference>
<dbReference type="EMBL" id="AL009126">
    <property type="protein sequence ID" value="CAB12445.1"/>
    <property type="molecule type" value="Genomic_DNA"/>
</dbReference>
<dbReference type="PIR" id="B69790">
    <property type="entry name" value="B69790"/>
</dbReference>
<dbReference type="RefSeq" id="NP_388507.1">
    <property type="nucleotide sequence ID" value="NC_000964.3"/>
</dbReference>
<dbReference type="RefSeq" id="WP_003243172.1">
    <property type="nucleotide sequence ID" value="NZ_OZ025638.1"/>
</dbReference>
<dbReference type="FunCoup" id="O34353">
    <property type="interactions" value="16"/>
</dbReference>
<dbReference type="STRING" id="224308.BSU06260"/>
<dbReference type="PaxDb" id="224308-BSU06260"/>
<dbReference type="DNASU" id="939488"/>
<dbReference type="EnsemblBacteria" id="CAB12445">
    <property type="protein sequence ID" value="CAB12445"/>
    <property type="gene ID" value="BSU_06260"/>
</dbReference>
<dbReference type="GeneID" id="939488"/>
<dbReference type="KEGG" id="bsu:BSU06260"/>
<dbReference type="PATRIC" id="fig|224308.179.peg.678"/>
<dbReference type="eggNOG" id="COG0823">
    <property type="taxonomic scope" value="Bacteria"/>
</dbReference>
<dbReference type="InParanoid" id="O34353"/>
<dbReference type="OrthoDB" id="2936680at2"/>
<dbReference type="BioCyc" id="BSUB:BSU06260-MONOMER"/>
<dbReference type="Proteomes" id="UP000001570">
    <property type="component" value="Chromosome"/>
</dbReference>
<dbReference type="Gene3D" id="2.130.10.10">
    <property type="entry name" value="YVTN repeat-like/Quinoprotein amine dehydrogenase"/>
    <property type="match status" value="1"/>
</dbReference>
<dbReference type="InterPro" id="IPR011659">
    <property type="entry name" value="PD40"/>
</dbReference>
<dbReference type="InterPro" id="IPR015943">
    <property type="entry name" value="WD40/YVTN_repeat-like_dom_sf"/>
</dbReference>
<dbReference type="PANTHER" id="PTHR36842:SF1">
    <property type="entry name" value="PROTEIN TOLB"/>
    <property type="match status" value="1"/>
</dbReference>
<dbReference type="PANTHER" id="PTHR36842">
    <property type="entry name" value="PROTEIN TOLB HOMOLOG"/>
    <property type="match status" value="1"/>
</dbReference>
<dbReference type="Pfam" id="PF07676">
    <property type="entry name" value="PD40"/>
    <property type="match status" value="1"/>
</dbReference>
<dbReference type="SUPFAM" id="SSF69304">
    <property type="entry name" value="Tricorn protease N-terminal domain"/>
    <property type="match status" value="1"/>
</dbReference>
<sequence length="348" mass="39711">MKKRIILLLAVIIAAAAAGVAFYVAKDKGHEKAADVSVNTESGDELLVSITDTDLLTKYYENDKVIHEEKLTSYPAFALDQKQQVLYYTGNNEQNEMRLFKLDLKSHKKTMLYKGAESADSLFLSKDRSTIYFRLGKADESNFRIAAFDLKTKKYKNLYPAANDQDDTVSSFFYNQKNDSFALLHYSVEEDYKKTDEANEKGIDPEPTTIHFAEGRQNKFNELKSLNQFISDIAVSDDDKRILFTSYTQKGTEQTASIQMLNADTKKYESIISNQKSFKLLIDAQPQFSKDGKNIYFLAEAKGAKKLKDETGREAKVRTIYSYSLENKTFKKVWENPNGIINSFFVIN</sequence>
<evidence type="ECO:0000255" key="1"/>
<accession>O34353</accession>
<accession>Q797C1</accession>
<protein>
    <recommendedName>
        <fullName>Uncharacterized protein YdjN</fullName>
    </recommendedName>
</protein>
<proteinExistence type="inferred from homology"/>
<gene>
    <name type="primary">ydjN</name>
    <name type="ordered locus">BSU06260</name>
</gene>
<name>YDJN_BACSU</name>
<feature type="signal peptide" evidence="1">
    <location>
        <begin position="1"/>
        <end position="26"/>
    </location>
</feature>
<feature type="chain" id="PRO_0000359943" description="Uncharacterized protein YdjN">
    <location>
        <begin position="27"/>
        <end position="348"/>
    </location>
</feature>
<organism>
    <name type="scientific">Bacillus subtilis (strain 168)</name>
    <dbReference type="NCBI Taxonomy" id="224308"/>
    <lineage>
        <taxon>Bacteria</taxon>
        <taxon>Bacillati</taxon>
        <taxon>Bacillota</taxon>
        <taxon>Bacilli</taxon>
        <taxon>Bacillales</taxon>
        <taxon>Bacillaceae</taxon>
        <taxon>Bacillus</taxon>
    </lineage>
</organism>